<comment type="function">
    <text evidence="4">Probable reductase, but unlike KCR1, has no beta-ketoacyl-coenzyme A reductase activity.</text>
</comment>
<comment type="subcellular location">
    <subcellularLocation>
        <location evidence="4">Endoplasmic reticulum membrane</location>
        <topology evidence="4">Single-pass membrane protein</topology>
    </subcellularLocation>
</comment>
<comment type="tissue specificity">
    <text evidence="4">Expressed in green siliques, flowers, inflorescence stems and leaves. Not detected in roots.</text>
</comment>
<comment type="developmental stage">
    <text evidence="4">Expressed in embryos of different stages and young developing seedlings, but absent from mature seeds.</text>
</comment>
<comment type="disruption phenotype">
    <text evidence="4">No visible phenotype.</text>
</comment>
<comment type="similarity">
    <text evidence="5">Belongs to the short-chain dehydrogenases/reductases (SDR) family.</text>
</comment>
<keyword id="KW-0256">Endoplasmic reticulum</keyword>
<keyword id="KW-0472">Membrane</keyword>
<keyword id="KW-0521">NADP</keyword>
<keyword id="KW-0560">Oxidoreductase</keyword>
<keyword id="KW-1185">Reference proteome</keyword>
<keyword id="KW-0812">Transmembrane</keyword>
<keyword id="KW-1133">Transmembrane helix</keyword>
<evidence type="ECO:0000250" key="1"/>
<evidence type="ECO:0000255" key="2"/>
<evidence type="ECO:0000255" key="3">
    <source>
        <dbReference type="PROSITE-ProRule" id="PRU10001"/>
    </source>
</evidence>
<evidence type="ECO:0000269" key="4">
    <source>
    </source>
</evidence>
<evidence type="ECO:0000305" key="5"/>
<proteinExistence type="evidence at transcript level"/>
<organism>
    <name type="scientific">Arabidopsis thaliana</name>
    <name type="common">Mouse-ear cress</name>
    <dbReference type="NCBI Taxonomy" id="3702"/>
    <lineage>
        <taxon>Eukaryota</taxon>
        <taxon>Viridiplantae</taxon>
        <taxon>Streptophyta</taxon>
        <taxon>Embryophyta</taxon>
        <taxon>Tracheophyta</taxon>
        <taxon>Spermatophyta</taxon>
        <taxon>Magnoliopsida</taxon>
        <taxon>eudicotyledons</taxon>
        <taxon>Gunneridae</taxon>
        <taxon>Pentapetalae</taxon>
        <taxon>rosids</taxon>
        <taxon>malvids</taxon>
        <taxon>Brassicales</taxon>
        <taxon>Brassicaceae</taxon>
        <taxon>Camelineae</taxon>
        <taxon>Arabidopsis</taxon>
    </lineage>
</organism>
<feature type="chain" id="PRO_0000420422" description="Very-long-chain 3-oxoacyl-CoA reductase-like protein At1g24470">
    <location>
        <begin position="1"/>
        <end position="312"/>
    </location>
</feature>
<feature type="transmembrane region" description="Helical" evidence="2">
    <location>
        <begin position="14"/>
        <end position="34"/>
    </location>
</feature>
<feature type="active site" description="Proton acceptor" evidence="3">
    <location>
        <position position="205"/>
    </location>
</feature>
<feature type="binding site" evidence="1">
    <location>
        <begin position="52"/>
        <end position="81"/>
    </location>
    <ligand>
        <name>NADP(+)</name>
        <dbReference type="ChEBI" id="CHEBI:58349"/>
    </ligand>
</feature>
<feature type="binding site" evidence="1">
    <location>
        <position position="190"/>
    </location>
    <ligand>
        <name>substrate</name>
    </ligand>
</feature>
<dbReference type="EC" id="1.-.-.-"/>
<dbReference type="EMBL" id="AC000103">
    <property type="protein sequence ID" value="AAF97959.1"/>
    <property type="molecule type" value="Genomic_DNA"/>
</dbReference>
<dbReference type="EMBL" id="CP002684">
    <property type="protein sequence ID" value="AEE30534.1"/>
    <property type="molecule type" value="Genomic_DNA"/>
</dbReference>
<dbReference type="EMBL" id="BT030066">
    <property type="protein sequence ID" value="ABN04804.1"/>
    <property type="molecule type" value="mRNA"/>
</dbReference>
<dbReference type="RefSeq" id="NP_173856.1">
    <property type="nucleotide sequence ID" value="NM_102292.3"/>
</dbReference>
<dbReference type="SMR" id="Q9FYL6"/>
<dbReference type="FunCoup" id="Q9FYL6">
    <property type="interactions" value="2381"/>
</dbReference>
<dbReference type="STRING" id="3702.Q9FYL6"/>
<dbReference type="PaxDb" id="3702-AT1G24470.1"/>
<dbReference type="ProteomicsDB" id="247313"/>
<dbReference type="EnsemblPlants" id="AT1G24470.1">
    <property type="protein sequence ID" value="AT1G24470.1"/>
    <property type="gene ID" value="AT1G24470"/>
</dbReference>
<dbReference type="GeneID" id="839063"/>
<dbReference type="Gramene" id="AT1G24470.1">
    <property type="protein sequence ID" value="AT1G24470.1"/>
    <property type="gene ID" value="AT1G24470"/>
</dbReference>
<dbReference type="KEGG" id="ath:AT1G24470"/>
<dbReference type="Araport" id="AT1G24470"/>
<dbReference type="TAIR" id="AT1G24470">
    <property type="gene designation" value="KCR2"/>
</dbReference>
<dbReference type="eggNOG" id="ENOG502QS3T">
    <property type="taxonomic scope" value="Eukaryota"/>
</dbReference>
<dbReference type="HOGENOM" id="CLU_010194_38_3_1"/>
<dbReference type="InParanoid" id="Q9FYL6"/>
<dbReference type="OMA" id="NINMMAV"/>
<dbReference type="PhylomeDB" id="Q9FYL6"/>
<dbReference type="BioCyc" id="ARA:AT1G24470-MONOMER"/>
<dbReference type="PRO" id="PR:Q9FYL6"/>
<dbReference type="Proteomes" id="UP000006548">
    <property type="component" value="Chromosome 1"/>
</dbReference>
<dbReference type="ExpressionAtlas" id="Q9FYL6">
    <property type="expression patterns" value="baseline and differential"/>
</dbReference>
<dbReference type="GO" id="GO:0005783">
    <property type="term" value="C:endoplasmic reticulum"/>
    <property type="evidence" value="ECO:0000314"/>
    <property type="project" value="TAIR"/>
</dbReference>
<dbReference type="GO" id="GO:0005789">
    <property type="term" value="C:endoplasmic reticulum membrane"/>
    <property type="evidence" value="ECO:0007669"/>
    <property type="project" value="UniProtKB-SubCell"/>
</dbReference>
<dbReference type="GO" id="GO:0045703">
    <property type="term" value="F:ketoreductase activity"/>
    <property type="evidence" value="ECO:0000314"/>
    <property type="project" value="TAIR"/>
</dbReference>
<dbReference type="CDD" id="cd05356">
    <property type="entry name" value="17beta-HSD1_like_SDR_c"/>
    <property type="match status" value="1"/>
</dbReference>
<dbReference type="FunFam" id="3.40.50.720:FF:000937">
    <property type="entry name" value="Short-chain dehydrogenase/reductase family protein"/>
    <property type="match status" value="1"/>
</dbReference>
<dbReference type="Gene3D" id="3.40.50.720">
    <property type="entry name" value="NAD(P)-binding Rossmann-like Domain"/>
    <property type="match status" value="1"/>
</dbReference>
<dbReference type="InterPro" id="IPR036291">
    <property type="entry name" value="NAD(P)-bd_dom_sf"/>
</dbReference>
<dbReference type="InterPro" id="IPR020904">
    <property type="entry name" value="Sc_DH/Rdtase_CS"/>
</dbReference>
<dbReference type="InterPro" id="IPR002347">
    <property type="entry name" value="SDR_fam"/>
</dbReference>
<dbReference type="InterPro" id="IPR051019">
    <property type="entry name" value="VLCFA-Steroid_DH"/>
</dbReference>
<dbReference type="PANTHER" id="PTHR43899:SF26">
    <property type="entry name" value="ENOYL-(ACYL CARRIER) REDUCTASE"/>
    <property type="match status" value="1"/>
</dbReference>
<dbReference type="PANTHER" id="PTHR43899">
    <property type="entry name" value="RH59310P"/>
    <property type="match status" value="1"/>
</dbReference>
<dbReference type="Pfam" id="PF00106">
    <property type="entry name" value="adh_short"/>
    <property type="match status" value="1"/>
</dbReference>
<dbReference type="PIRSF" id="PIRSF000126">
    <property type="entry name" value="11-beta-HSD1"/>
    <property type="match status" value="1"/>
</dbReference>
<dbReference type="PRINTS" id="PR00081">
    <property type="entry name" value="GDHRDH"/>
</dbReference>
<dbReference type="PRINTS" id="PR00080">
    <property type="entry name" value="SDRFAMILY"/>
</dbReference>
<dbReference type="SUPFAM" id="SSF51735">
    <property type="entry name" value="NAD(P)-binding Rossmann-fold domains"/>
    <property type="match status" value="1"/>
</dbReference>
<dbReference type="PROSITE" id="PS00061">
    <property type="entry name" value="ADH_SHORT"/>
    <property type="match status" value="1"/>
</dbReference>
<name>KCR2_ARATH</name>
<protein>
    <recommendedName>
        <fullName>Very-long-chain 3-oxoacyl-CoA reductase-like protein At1g24470</fullName>
        <ecNumber>1.-.-.-</ecNumber>
    </recommendedName>
    <alternativeName>
        <fullName>Beta-ketoacyl reductase 2</fullName>
        <shortName>AtKCR2</shortName>
    </alternativeName>
</protein>
<accession>Q9FYL6</accession>
<reference key="1">
    <citation type="journal article" date="2000" name="Nature">
        <title>Sequence and analysis of chromosome 1 of the plant Arabidopsis thaliana.</title>
        <authorList>
            <person name="Theologis A."/>
            <person name="Ecker J.R."/>
            <person name="Palm C.J."/>
            <person name="Federspiel N.A."/>
            <person name="Kaul S."/>
            <person name="White O."/>
            <person name="Alonso J."/>
            <person name="Altafi H."/>
            <person name="Araujo R."/>
            <person name="Bowman C.L."/>
            <person name="Brooks S.Y."/>
            <person name="Buehler E."/>
            <person name="Chan A."/>
            <person name="Chao Q."/>
            <person name="Chen H."/>
            <person name="Cheuk R.F."/>
            <person name="Chin C.W."/>
            <person name="Chung M.K."/>
            <person name="Conn L."/>
            <person name="Conway A.B."/>
            <person name="Conway A.R."/>
            <person name="Creasy T.H."/>
            <person name="Dewar K."/>
            <person name="Dunn P."/>
            <person name="Etgu P."/>
            <person name="Feldblyum T.V."/>
            <person name="Feng J.-D."/>
            <person name="Fong B."/>
            <person name="Fujii C.Y."/>
            <person name="Gill J.E."/>
            <person name="Goldsmith A.D."/>
            <person name="Haas B."/>
            <person name="Hansen N.F."/>
            <person name="Hughes B."/>
            <person name="Huizar L."/>
            <person name="Hunter J.L."/>
            <person name="Jenkins J."/>
            <person name="Johnson-Hopson C."/>
            <person name="Khan S."/>
            <person name="Khaykin E."/>
            <person name="Kim C.J."/>
            <person name="Koo H.L."/>
            <person name="Kremenetskaia I."/>
            <person name="Kurtz D.B."/>
            <person name="Kwan A."/>
            <person name="Lam B."/>
            <person name="Langin-Hooper S."/>
            <person name="Lee A."/>
            <person name="Lee J.M."/>
            <person name="Lenz C.A."/>
            <person name="Li J.H."/>
            <person name="Li Y.-P."/>
            <person name="Lin X."/>
            <person name="Liu S.X."/>
            <person name="Liu Z.A."/>
            <person name="Luros J.S."/>
            <person name="Maiti R."/>
            <person name="Marziali A."/>
            <person name="Militscher J."/>
            <person name="Miranda M."/>
            <person name="Nguyen M."/>
            <person name="Nierman W.C."/>
            <person name="Osborne B.I."/>
            <person name="Pai G."/>
            <person name="Peterson J."/>
            <person name="Pham P.K."/>
            <person name="Rizzo M."/>
            <person name="Rooney T."/>
            <person name="Rowley D."/>
            <person name="Sakano H."/>
            <person name="Salzberg S.L."/>
            <person name="Schwartz J.R."/>
            <person name="Shinn P."/>
            <person name="Southwick A.M."/>
            <person name="Sun H."/>
            <person name="Tallon L.J."/>
            <person name="Tambunga G."/>
            <person name="Toriumi M.J."/>
            <person name="Town C.D."/>
            <person name="Utterback T."/>
            <person name="Van Aken S."/>
            <person name="Vaysberg M."/>
            <person name="Vysotskaia V.S."/>
            <person name="Walker M."/>
            <person name="Wu D."/>
            <person name="Yu G."/>
            <person name="Fraser C.M."/>
            <person name="Venter J.C."/>
            <person name="Davis R.W."/>
        </authorList>
    </citation>
    <scope>NUCLEOTIDE SEQUENCE [LARGE SCALE GENOMIC DNA]</scope>
    <source>
        <strain>cv. Columbia</strain>
    </source>
</reference>
<reference key="2">
    <citation type="journal article" date="2017" name="Plant J.">
        <title>Araport11: a complete reannotation of the Arabidopsis thaliana reference genome.</title>
        <authorList>
            <person name="Cheng C.Y."/>
            <person name="Krishnakumar V."/>
            <person name="Chan A.P."/>
            <person name="Thibaud-Nissen F."/>
            <person name="Schobel S."/>
            <person name="Town C.D."/>
        </authorList>
    </citation>
    <scope>GENOME REANNOTATION</scope>
    <source>
        <strain>cv. Columbia</strain>
    </source>
</reference>
<reference key="3">
    <citation type="journal article" date="2003" name="Science">
        <title>Empirical analysis of transcriptional activity in the Arabidopsis genome.</title>
        <authorList>
            <person name="Yamada K."/>
            <person name="Lim J."/>
            <person name="Dale J.M."/>
            <person name="Chen H."/>
            <person name="Shinn P."/>
            <person name="Palm C.J."/>
            <person name="Southwick A.M."/>
            <person name="Wu H.C."/>
            <person name="Kim C.J."/>
            <person name="Nguyen M."/>
            <person name="Pham P.K."/>
            <person name="Cheuk R.F."/>
            <person name="Karlin-Newmann G."/>
            <person name="Liu S.X."/>
            <person name="Lam B."/>
            <person name="Sakano H."/>
            <person name="Wu T."/>
            <person name="Yu G."/>
            <person name="Miranda M."/>
            <person name="Quach H.L."/>
            <person name="Tripp M."/>
            <person name="Chang C.H."/>
            <person name="Lee J.M."/>
            <person name="Toriumi M.J."/>
            <person name="Chan M.M."/>
            <person name="Tang C.C."/>
            <person name="Onodera C.S."/>
            <person name="Deng J.M."/>
            <person name="Akiyama K."/>
            <person name="Ansari Y."/>
            <person name="Arakawa T."/>
            <person name="Banh J."/>
            <person name="Banno F."/>
            <person name="Bowser L."/>
            <person name="Brooks S.Y."/>
            <person name="Carninci P."/>
            <person name="Chao Q."/>
            <person name="Choy N."/>
            <person name="Enju A."/>
            <person name="Goldsmith A.D."/>
            <person name="Gurjal M."/>
            <person name="Hansen N.F."/>
            <person name="Hayashizaki Y."/>
            <person name="Johnson-Hopson C."/>
            <person name="Hsuan V.W."/>
            <person name="Iida K."/>
            <person name="Karnes M."/>
            <person name="Khan S."/>
            <person name="Koesema E."/>
            <person name="Ishida J."/>
            <person name="Jiang P.X."/>
            <person name="Jones T."/>
            <person name="Kawai J."/>
            <person name="Kamiya A."/>
            <person name="Meyers C."/>
            <person name="Nakajima M."/>
            <person name="Narusaka M."/>
            <person name="Seki M."/>
            <person name="Sakurai T."/>
            <person name="Satou M."/>
            <person name="Tamse R."/>
            <person name="Vaysberg M."/>
            <person name="Wallender E.K."/>
            <person name="Wong C."/>
            <person name="Yamamura Y."/>
            <person name="Yuan S."/>
            <person name="Shinozaki K."/>
            <person name="Davis R.W."/>
            <person name="Theologis A."/>
            <person name="Ecker J.R."/>
        </authorList>
    </citation>
    <scope>NUCLEOTIDE SEQUENCE [LARGE SCALE MRNA]</scope>
    <source>
        <strain>cv. Columbia</strain>
    </source>
</reference>
<reference key="4">
    <citation type="submission" date="2007-01" db="EMBL/GenBank/DDBJ databases">
        <title>Arabidopsis ORF clones.</title>
        <authorList>
            <person name="Kim C.J."/>
            <person name="Bautista V.R."/>
            <person name="Chen H."/>
            <person name="De Los Reyes C."/>
            <person name="Wu S.Y."/>
            <person name="Ecker J.R."/>
        </authorList>
    </citation>
    <scope>NUCLEOTIDE SEQUENCE [LARGE SCALE MRNA]</scope>
</reference>
<reference key="5">
    <citation type="journal article" date="2005" name="Plant J.">
        <title>Characterization of two GL8 paralogs reveals that the 3-ketoacyl reductase component of fatty acid elongase is essential for maize (Zea mays L.) development.</title>
        <authorList>
            <person name="Dietrich C.R."/>
            <person name="Perera M.A."/>
            <person name="Yandeau-Nelson M.D."/>
            <person name="Meeley R.B."/>
            <person name="Nikolau B.J."/>
            <person name="Schnable P.S."/>
        </authorList>
    </citation>
    <scope>IDENTIFICATION</scope>
</reference>
<reference key="6">
    <citation type="journal article" date="2009" name="Plant Physiol.">
        <title>Functional characterization of the Arabidopsis beta-ketoacyl-coenzyme A reductase candidates of the fatty acid elongase.</title>
        <authorList>
            <person name="Beaudoin F."/>
            <person name="Wu X."/>
            <person name="Li F."/>
            <person name="Haslam R.P."/>
            <person name="Markham J.E."/>
            <person name="Zheng H."/>
            <person name="Napier J.A."/>
            <person name="Kunst L."/>
        </authorList>
    </citation>
    <scope>FUNCTION</scope>
    <scope>DISRUPTION PHENOTYPE</scope>
    <scope>TISSUE SPECIFICITY</scope>
    <scope>DEVELOPMENTAL STAGE</scope>
    <scope>SUBCELLULAR LOCATION</scope>
</reference>
<sequence>MQGACISESQPWYLHFVCFIGFLFLLRVLFIPLLKWFTTRFLLTPKRLKRYGSWAMVTGATEGIGRAFAHELAKHGLNLILVSRNLSKLESVSDDFQQEFPHIKIKIIPFDFSSEGGYGAIEEGIKGLEVGILINNVGITYPRAMFFHEVDQLTWTKILRVNLEATTWVTRSLIGPMLHRRRGAIVNISSGAAVVVPSHPLYAIYAATKAYVDALSRSLHVEYKQFGIDVQCQVPLYVSTRMVSEVAAIDKPSLFVPSPEVYAKAAVAQIGIGSRCSPFWAHSLQWFLVGLVPDNLVDTWRLSIGLRRRSLS</sequence>
<gene>
    <name type="primary">KCR2</name>
    <name type="ordered locus">At1g24470</name>
    <name type="ORF">F21J9.13</name>
</gene>